<sequence>IQSTSMDQGILTEDSMNSFIRTLIQAGIWKNKVPKQMARTKDGTQTTVKKSEAEADATASQDTRLGFQPIVSVDAELLRQQRRFSSPRVLLSENTPLEPPPLYLTEEPVALNRTSRRKREGKSHRGEYSVCDSESRWVTDKSSAVDIRGHQVTVLGEIRMGPS</sequence>
<comment type="function">
    <text evidence="1">Seems to promote the survival of visceral and proprioceptive sensory neurons.</text>
</comment>
<comment type="subcellular location">
    <subcellularLocation>
        <location evidence="1">Secreted</location>
    </subcellularLocation>
</comment>
<comment type="similarity">
    <text evidence="4">Belongs to the NGF-beta family.</text>
</comment>
<protein>
    <recommendedName>
        <fullName>Neurotrophin-3</fullName>
        <shortName>NT-3</shortName>
    </recommendedName>
</protein>
<feature type="signal peptide" evidence="2">
    <location>
        <begin position="1" status="less than"/>
        <end position="3"/>
    </location>
</feature>
<feature type="propeptide" id="PRO_0000346735" evidence="1">
    <location>
        <begin position="4"/>
        <end position="119"/>
    </location>
</feature>
<feature type="chain" id="PRO_0000346736" description="Neurotrophin-3">
    <location>
        <begin position="120"/>
        <end position="163" status="greater than"/>
    </location>
</feature>
<feature type="region of interest" description="Disordered" evidence="3">
    <location>
        <begin position="38"/>
        <end position="60"/>
    </location>
</feature>
<feature type="region of interest" description="Disordered" evidence="3">
    <location>
        <begin position="90"/>
        <end position="131"/>
    </location>
</feature>
<feature type="glycosylation site" description="N-linked (GlcNAc...) asparagine" evidence="2">
    <location>
        <position position="112"/>
    </location>
</feature>
<feature type="non-terminal residue">
    <location>
        <position position="1"/>
    </location>
</feature>
<feature type="non-terminal residue">
    <location>
        <position position="163"/>
    </location>
</feature>
<accession>Q1X6Z2</accession>
<evidence type="ECO:0000250" key="1"/>
<evidence type="ECO:0000255" key="2"/>
<evidence type="ECO:0000256" key="3">
    <source>
        <dbReference type="SAM" id="MobiDB-lite"/>
    </source>
</evidence>
<evidence type="ECO:0000305" key="4"/>
<name>NTF3_EUNNO</name>
<gene>
    <name type="primary">NTF3</name>
</gene>
<organism>
    <name type="scientific">Eunectes notaeus</name>
    <name type="common">Yellow anaconda</name>
    <dbReference type="NCBI Taxonomy" id="51877"/>
    <lineage>
        <taxon>Eukaryota</taxon>
        <taxon>Metazoa</taxon>
        <taxon>Chordata</taxon>
        <taxon>Craniata</taxon>
        <taxon>Vertebrata</taxon>
        <taxon>Euteleostomi</taxon>
        <taxon>Lepidosauria</taxon>
        <taxon>Squamata</taxon>
        <taxon>Bifurcata</taxon>
        <taxon>Unidentata</taxon>
        <taxon>Episquamata</taxon>
        <taxon>Toxicofera</taxon>
        <taxon>Serpentes</taxon>
        <taxon>Henophidia</taxon>
        <taxon>Boidae</taxon>
        <taxon>Boinae</taxon>
        <taxon>Eunectes</taxon>
    </lineage>
</organism>
<proteinExistence type="inferred from homology"/>
<dbReference type="EMBL" id="AY988046">
    <property type="protein sequence ID" value="AAY44253.1"/>
    <property type="molecule type" value="Genomic_DNA"/>
</dbReference>
<dbReference type="SMR" id="Q1X6Z2"/>
<dbReference type="GlyCosmos" id="Q1X6Z2">
    <property type="glycosylation" value="1 site, No reported glycans"/>
</dbReference>
<dbReference type="GO" id="GO:0030424">
    <property type="term" value="C:axon"/>
    <property type="evidence" value="ECO:0007669"/>
    <property type="project" value="TreeGrafter"/>
</dbReference>
<dbReference type="GO" id="GO:0030425">
    <property type="term" value="C:dendrite"/>
    <property type="evidence" value="ECO:0007669"/>
    <property type="project" value="TreeGrafter"/>
</dbReference>
<dbReference type="GO" id="GO:0005615">
    <property type="term" value="C:extracellular space"/>
    <property type="evidence" value="ECO:0007669"/>
    <property type="project" value="TreeGrafter"/>
</dbReference>
<dbReference type="GO" id="GO:0008021">
    <property type="term" value="C:synaptic vesicle"/>
    <property type="evidence" value="ECO:0007669"/>
    <property type="project" value="TreeGrafter"/>
</dbReference>
<dbReference type="GO" id="GO:0008083">
    <property type="term" value="F:growth factor activity"/>
    <property type="evidence" value="ECO:0007669"/>
    <property type="project" value="UniProtKB-KW"/>
</dbReference>
<dbReference type="GO" id="GO:0005163">
    <property type="term" value="F:nerve growth factor receptor binding"/>
    <property type="evidence" value="ECO:0007669"/>
    <property type="project" value="TreeGrafter"/>
</dbReference>
<dbReference type="GO" id="GO:0007169">
    <property type="term" value="P:cell surface receptor protein tyrosine kinase signaling pathway"/>
    <property type="evidence" value="ECO:0007669"/>
    <property type="project" value="TreeGrafter"/>
</dbReference>
<dbReference type="GO" id="GO:0050804">
    <property type="term" value="P:modulation of chemical synaptic transmission"/>
    <property type="evidence" value="ECO:0007669"/>
    <property type="project" value="TreeGrafter"/>
</dbReference>
<dbReference type="GO" id="GO:0043524">
    <property type="term" value="P:negative regulation of neuron apoptotic process"/>
    <property type="evidence" value="ECO:0007669"/>
    <property type="project" value="TreeGrafter"/>
</dbReference>
<dbReference type="GO" id="GO:0021675">
    <property type="term" value="P:nerve development"/>
    <property type="evidence" value="ECO:0007669"/>
    <property type="project" value="TreeGrafter"/>
</dbReference>
<dbReference type="GO" id="GO:0038180">
    <property type="term" value="P:nerve growth factor signaling pathway"/>
    <property type="evidence" value="ECO:0007669"/>
    <property type="project" value="TreeGrafter"/>
</dbReference>
<dbReference type="GO" id="GO:0048812">
    <property type="term" value="P:neuron projection morphogenesis"/>
    <property type="evidence" value="ECO:0007669"/>
    <property type="project" value="TreeGrafter"/>
</dbReference>
<dbReference type="Gene3D" id="2.10.90.10">
    <property type="entry name" value="Cystine-knot cytokines"/>
    <property type="match status" value="1"/>
</dbReference>
<dbReference type="InterPro" id="IPR029034">
    <property type="entry name" value="Cystine-knot_cytokine"/>
</dbReference>
<dbReference type="InterPro" id="IPR020408">
    <property type="entry name" value="Nerve_growth_factor-like"/>
</dbReference>
<dbReference type="InterPro" id="IPR002072">
    <property type="entry name" value="Nerve_growth_factor-rel"/>
</dbReference>
<dbReference type="InterPro" id="IPR015578">
    <property type="entry name" value="Neurotrophin-3"/>
</dbReference>
<dbReference type="InterPro" id="IPR045815">
    <property type="entry name" value="NTF3_N"/>
</dbReference>
<dbReference type="PANTHER" id="PTHR11589">
    <property type="entry name" value="NERVE GROWTH FACTOR NGF -RELATED"/>
    <property type="match status" value="1"/>
</dbReference>
<dbReference type="PANTHER" id="PTHR11589:SF4">
    <property type="entry name" value="NEUROTROPHIN-3"/>
    <property type="match status" value="1"/>
</dbReference>
<dbReference type="Pfam" id="PF00243">
    <property type="entry name" value="NGF"/>
    <property type="match status" value="1"/>
</dbReference>
<dbReference type="Pfam" id="PF19338">
    <property type="entry name" value="NTF3_N"/>
    <property type="match status" value="1"/>
</dbReference>
<dbReference type="PIRSF" id="PIRSF001789">
    <property type="entry name" value="NGF"/>
    <property type="match status" value="1"/>
</dbReference>
<dbReference type="PRINTS" id="PR01914">
    <property type="entry name" value="NEUROTROPHN3"/>
</dbReference>
<dbReference type="SMART" id="SM00140">
    <property type="entry name" value="NGF"/>
    <property type="match status" value="1"/>
</dbReference>
<dbReference type="SUPFAM" id="SSF57501">
    <property type="entry name" value="Cystine-knot cytokines"/>
    <property type="match status" value="1"/>
</dbReference>
<dbReference type="PROSITE" id="PS50270">
    <property type="entry name" value="NGF_2"/>
    <property type="match status" value="1"/>
</dbReference>
<keyword id="KW-0165">Cleavage on pair of basic residues</keyword>
<keyword id="KW-0325">Glycoprotein</keyword>
<keyword id="KW-0339">Growth factor</keyword>
<keyword id="KW-0964">Secreted</keyword>
<keyword id="KW-0732">Signal</keyword>
<reference key="1">
    <citation type="journal article" date="2006" name="Mol. Phylogenet. Evol.">
        <title>Dispersal and vicariance: the complex evolutionary history of boid snakes.</title>
        <authorList>
            <person name="Noonan B.P."/>
            <person name="Chippindale P.T."/>
        </authorList>
    </citation>
    <scope>NUCLEOTIDE SEQUENCE [GENOMIC DNA]</scope>
</reference>